<name>UH105_ALTSL</name>
<dbReference type="EC" id="3.2.1.-" evidence="3"/>
<dbReference type="RefSeq" id="WP_032096149.1">
    <property type="nucleotide sequence ID" value="NZ_JQFW01000010.1"/>
</dbReference>
<dbReference type="SMR" id="P9WF04"/>
<dbReference type="OrthoDB" id="258246at2"/>
<dbReference type="GO" id="GO:0005886">
    <property type="term" value="C:plasma membrane"/>
    <property type="evidence" value="ECO:0007669"/>
    <property type="project" value="UniProtKB-SubCell"/>
</dbReference>
<dbReference type="GO" id="GO:0016787">
    <property type="term" value="F:hydrolase activity"/>
    <property type="evidence" value="ECO:0007669"/>
    <property type="project" value="UniProtKB-KW"/>
</dbReference>
<dbReference type="GO" id="GO:0005975">
    <property type="term" value="P:carbohydrate metabolic process"/>
    <property type="evidence" value="ECO:0007669"/>
    <property type="project" value="InterPro"/>
</dbReference>
<dbReference type="Gene3D" id="1.50.10.10">
    <property type="match status" value="1"/>
</dbReference>
<dbReference type="InterPro" id="IPR008928">
    <property type="entry name" value="6-hairpin_glycosidase_sf"/>
</dbReference>
<dbReference type="InterPro" id="IPR012341">
    <property type="entry name" value="6hp_glycosidase-like_sf"/>
</dbReference>
<dbReference type="InterPro" id="IPR010905">
    <property type="entry name" value="Glyco_hydro_88"/>
</dbReference>
<dbReference type="InterPro" id="IPR052043">
    <property type="entry name" value="PolySaccharide_Degr_Enz"/>
</dbReference>
<dbReference type="PANTHER" id="PTHR33886">
    <property type="entry name" value="UNSATURATED RHAMNOGALACTURONAN HYDROLASE (EUROFUNG)"/>
    <property type="match status" value="1"/>
</dbReference>
<dbReference type="PANTHER" id="PTHR33886:SF8">
    <property type="entry name" value="UNSATURATED RHAMNOGALACTURONAN HYDROLASE (EUROFUNG)"/>
    <property type="match status" value="1"/>
</dbReference>
<dbReference type="Pfam" id="PF07470">
    <property type="entry name" value="Glyco_hydro_88"/>
    <property type="match status" value="1"/>
</dbReference>
<dbReference type="SUPFAM" id="SSF48208">
    <property type="entry name" value="Six-hairpin glycosidases"/>
    <property type="match status" value="1"/>
</dbReference>
<dbReference type="PROSITE" id="PS51257">
    <property type="entry name" value="PROKAR_LIPOPROTEIN"/>
    <property type="match status" value="1"/>
</dbReference>
<protein>
    <recommendedName>
        <fullName evidence="4">Unsaturated 3S-rhamnoglycuronyl hydrolase</fullName>
        <ecNumber evidence="3">3.2.1.-</ecNumber>
    </recommendedName>
    <alternativeName>
        <fullName>Ulvan hydrolase</fullName>
    </alternativeName>
    <alternativeName>
        <fullName>Unsaturated beta-glucuronyl hydrolase</fullName>
        <shortName>UGL</shortName>
    </alternativeName>
</protein>
<keyword id="KW-1003">Cell membrane</keyword>
<keyword id="KW-0378">Hydrolase</keyword>
<keyword id="KW-0449">Lipoprotein</keyword>
<keyword id="KW-0472">Membrane</keyword>
<keyword id="KW-0564">Palmitate</keyword>
<keyword id="KW-0732">Signal</keyword>
<gene>
    <name type="ORF">LOR_28</name>
</gene>
<feature type="signal peptide" evidence="2">
    <location>
        <begin position="1"/>
        <end position="21"/>
    </location>
</feature>
<feature type="chain" id="PRO_0000448305" description="Unsaturated 3S-rhamnoglycuronyl hydrolase">
    <location>
        <begin position="22"/>
        <end position="413"/>
    </location>
</feature>
<feature type="active site" description="Proton donor" evidence="1">
    <location>
        <position position="203"/>
    </location>
</feature>
<feature type="lipid moiety-binding region" description="N-palmitoyl cysteine" evidence="2">
    <location>
        <position position="22"/>
    </location>
</feature>
<feature type="lipid moiety-binding region" description="S-diacylglycerol cysteine" evidence="2">
    <location>
        <position position="22"/>
    </location>
</feature>
<proteinExistence type="evidence at protein level"/>
<accession>P9WF04</accession>
<comment type="function">
    <text evidence="3">Glucuronyl hydrolase involved in ulvan degradation. Ulvan is the main polysaccharide component of the Ulvales (green seaweed) cell wall. It is composed of disaccharide building blocks comprising 3-sulfated rhamnose (Rha3S) linked to D-glucuronic acid (GlcA), L-iduronic acid (IduA), or D-xylose (Xyl). Unsaturated 3S-rhamnoglycuronyl hydrolase works together with ulvan lyases to fully degrade the ulvan polymer, catalyzing specifically the cleavage of the unsaturated 4-deoxy-L-threo-hex-4-enopyranosiduronic acid (deltaUA) of the deltaUA-oligosaccharides deltaUA-Rha3S, deltaUA-Rha3S-IduA-Rha3S and deltaUA-Rha3S-Xyl-Rha3S, the end products of the ulvan lyase reaction.</text>
</comment>
<comment type="subcellular location">
    <subcellularLocation>
        <location evidence="2">Cell membrane</location>
        <topology evidence="2">Lipid-anchor</topology>
    </subcellularLocation>
</comment>
<comment type="similarity">
    <text evidence="4">Belongs to the glycosyl hydrolase 105 family.</text>
</comment>
<organism>
    <name type="scientific">Alteromonas sp. (strain LOR)</name>
    <dbReference type="NCBI Taxonomy" id="1537994"/>
    <lineage>
        <taxon>Bacteria</taxon>
        <taxon>Pseudomonadati</taxon>
        <taxon>Pseudomonadota</taxon>
        <taxon>Gammaproteobacteria</taxon>
        <taxon>Alteromonadales</taxon>
        <taxon>Alteromonadaceae</taxon>
        <taxon>Alteromonas/Salinimonas group</taxon>
        <taxon>Alteromonas</taxon>
    </lineage>
</organism>
<sequence length="413" mass="46447">MNHTKLKLSAVALTLALGLSACSGESPEKQVQSAESEQMKAVDVDKSMPMQSIESTAKRIGESAANWQIAQFGNLDYIPESHRAKSENAKFWIQASFYIGLTRWIDATDDKQLESFVKQVAEKENYELILERPYHADDHAIAQTYLWLAERAGVQEAYMPTKEVFDMILSKPPQVGLNMGDSESSSGKYHLEGNCQLRWCWADALFMAPRAWAQMTKVTSDPKYLEYGNKEFWAAADYLFSDEYGLFFRDSRYFDAKSDNGEPVFWGRGNGWVFAAIPMIIEELPEGHPSKDRYIELYKKHAEGLMALQKEDGYWPASLMDPDKVRTPEVSGTGFITFGLAWGVNNGILTDQRSKDVVEKGWSAITKAVTDDGRVNWVQHVGKSPDPVKESDSQLYGTGAVLLAASEMLIWNK</sequence>
<reference key="1">
    <citation type="journal article" date="2014" name="Genome Announc.">
        <title>Draft genome sequences of two ulvan-degrading isolates, strains LTR and LOR, that belong to the Alteromonas genus.</title>
        <authorList>
            <person name="Kopel M."/>
            <person name="Helbert W."/>
            <person name="Henrissat B."/>
            <person name="Doniger T."/>
            <person name="Banin E."/>
        </authorList>
    </citation>
    <scope>NUCLEOTIDE SEQUENCE [LARGE SCALE GENOMIC DNA]</scope>
    <source>
        <strain>LOR</strain>
    </source>
</reference>
<reference key="2">
    <citation type="journal article" date="2017" name="Algal Res.">
        <title>Functional characterization of a novel 'ulvan utilization loci' found in Alteromonas sp. LOR genome.</title>
        <authorList>
            <person name="Foran E."/>
            <person name="Buravenkov V."/>
            <person name="Kopel M."/>
            <person name="Mizrahi N."/>
            <person name="Shoshani S."/>
            <person name="Helbert W."/>
            <person name="Banin E."/>
        </authorList>
    </citation>
    <scope>FUNCTION</scope>
    <scope>CATALYTIC ACTIVITY</scope>
</reference>
<evidence type="ECO:0000250" key="1">
    <source>
        <dbReference type="UniProtKB" id="O34559"/>
    </source>
</evidence>
<evidence type="ECO:0000255" key="2">
    <source>
        <dbReference type="PROSITE-ProRule" id="PRU00303"/>
    </source>
</evidence>
<evidence type="ECO:0000269" key="3">
    <source ref="2"/>
</evidence>
<evidence type="ECO:0000305" key="4"/>